<organism>
    <name type="scientific">Treponema pallidum subsp. pallidum (strain SS14)</name>
    <dbReference type="NCBI Taxonomy" id="455434"/>
    <lineage>
        <taxon>Bacteria</taxon>
        <taxon>Pseudomonadati</taxon>
        <taxon>Spirochaetota</taxon>
        <taxon>Spirochaetia</taxon>
        <taxon>Spirochaetales</taxon>
        <taxon>Treponemataceae</taxon>
        <taxon>Treponema</taxon>
    </lineage>
</organism>
<gene>
    <name evidence="1" type="primary">rplW</name>
    <name type="ordered locus">TPASS_0191</name>
</gene>
<name>RL23_TREPS</name>
<feature type="chain" id="PRO_1000144619" description="Large ribosomal subunit protein uL23">
    <location>
        <begin position="1"/>
        <end position="94"/>
    </location>
</feature>
<proteinExistence type="inferred from homology"/>
<keyword id="KW-0687">Ribonucleoprotein</keyword>
<keyword id="KW-0689">Ribosomal protein</keyword>
<keyword id="KW-0694">RNA-binding</keyword>
<keyword id="KW-0699">rRNA-binding</keyword>
<comment type="function">
    <text evidence="1">One of the early assembly proteins it binds 23S rRNA. One of the proteins that surrounds the polypeptide exit tunnel on the outside of the ribosome. Forms the main docking site for trigger factor binding to the ribosome.</text>
</comment>
<comment type="subunit">
    <text evidence="1">Part of the 50S ribosomal subunit. Contacts protein L29, and trigger factor when it is bound to the ribosome.</text>
</comment>
<comment type="similarity">
    <text evidence="1">Belongs to the universal ribosomal protein uL23 family.</text>
</comment>
<dbReference type="EMBL" id="CP000805">
    <property type="protein sequence ID" value="ACD70617.1"/>
    <property type="molecule type" value="Genomic_DNA"/>
</dbReference>
<dbReference type="RefSeq" id="WP_010881638.1">
    <property type="nucleotide sequence ID" value="NC_021508.1"/>
</dbReference>
<dbReference type="SMR" id="B2S2D8"/>
<dbReference type="KEGG" id="tpp:TPASS_0191"/>
<dbReference type="PATRIC" id="fig|455434.6.peg.194"/>
<dbReference type="Proteomes" id="UP000001202">
    <property type="component" value="Chromosome"/>
</dbReference>
<dbReference type="GO" id="GO:1990904">
    <property type="term" value="C:ribonucleoprotein complex"/>
    <property type="evidence" value="ECO:0007669"/>
    <property type="project" value="UniProtKB-KW"/>
</dbReference>
<dbReference type="GO" id="GO:0005840">
    <property type="term" value="C:ribosome"/>
    <property type="evidence" value="ECO:0007669"/>
    <property type="project" value="UniProtKB-KW"/>
</dbReference>
<dbReference type="GO" id="GO:0019843">
    <property type="term" value="F:rRNA binding"/>
    <property type="evidence" value="ECO:0007669"/>
    <property type="project" value="UniProtKB-UniRule"/>
</dbReference>
<dbReference type="GO" id="GO:0003735">
    <property type="term" value="F:structural constituent of ribosome"/>
    <property type="evidence" value="ECO:0007669"/>
    <property type="project" value="InterPro"/>
</dbReference>
<dbReference type="GO" id="GO:0006412">
    <property type="term" value="P:translation"/>
    <property type="evidence" value="ECO:0007669"/>
    <property type="project" value="UniProtKB-UniRule"/>
</dbReference>
<dbReference type="FunFam" id="3.30.70.330:FF:000001">
    <property type="entry name" value="50S ribosomal protein L23"/>
    <property type="match status" value="1"/>
</dbReference>
<dbReference type="Gene3D" id="3.30.70.330">
    <property type="match status" value="1"/>
</dbReference>
<dbReference type="HAMAP" id="MF_01369_B">
    <property type="entry name" value="Ribosomal_uL23_B"/>
    <property type="match status" value="1"/>
</dbReference>
<dbReference type="InterPro" id="IPR012677">
    <property type="entry name" value="Nucleotide-bd_a/b_plait_sf"/>
</dbReference>
<dbReference type="InterPro" id="IPR013025">
    <property type="entry name" value="Ribosomal_uL23-like"/>
</dbReference>
<dbReference type="InterPro" id="IPR012678">
    <property type="entry name" value="Ribosomal_uL23/eL15/eS24_sf"/>
</dbReference>
<dbReference type="NCBIfam" id="NF004363">
    <property type="entry name" value="PRK05738.2-4"/>
    <property type="match status" value="1"/>
</dbReference>
<dbReference type="NCBIfam" id="NF004366">
    <property type="entry name" value="PRK05738.3-2"/>
    <property type="match status" value="1"/>
</dbReference>
<dbReference type="Pfam" id="PF00276">
    <property type="entry name" value="Ribosomal_L23"/>
    <property type="match status" value="1"/>
</dbReference>
<dbReference type="SUPFAM" id="SSF54189">
    <property type="entry name" value="Ribosomal proteins S24e, L23 and L15e"/>
    <property type="match status" value="1"/>
</dbReference>
<evidence type="ECO:0000255" key="1">
    <source>
        <dbReference type="HAMAP-Rule" id="MF_01369"/>
    </source>
</evidence>
<evidence type="ECO:0000305" key="2"/>
<protein>
    <recommendedName>
        <fullName evidence="1">Large ribosomal subunit protein uL23</fullName>
    </recommendedName>
    <alternativeName>
        <fullName evidence="2">50S ribosomal protein L23</fullName>
    </alternativeName>
</protein>
<reference key="1">
    <citation type="journal article" date="2008" name="BMC Microbiol.">
        <title>Complete genome sequence of Treponema pallidum ssp. pallidum strain SS14 determined with oligonucleotide arrays.</title>
        <authorList>
            <person name="Matejkova P."/>
            <person name="Strouhal M."/>
            <person name="Smajs D."/>
            <person name="Norris S.J."/>
            <person name="Palzkill T."/>
            <person name="Petrosino J.F."/>
            <person name="Sodergren E."/>
            <person name="Norton J.E."/>
            <person name="Singh J."/>
            <person name="Richmond T.A."/>
            <person name="Molla M.N."/>
            <person name="Albert T.J."/>
            <person name="Weinstock G.M."/>
        </authorList>
    </citation>
    <scope>NUCLEOTIDE SEQUENCE [LARGE SCALE GENOMIC DNA]</scope>
    <source>
        <strain>SS14</strain>
    </source>
</reference>
<accession>B2S2D8</accession>
<sequence length="94" mass="10512">MEHTDVVIAPVLTEKSNALRQQGKYVFRVAARATKIQIKQAVTQLFGVTVRRCTVMNVFGKKRRVRHRTGRTSGWKKAIVHVAAGQSIGVLERA</sequence>